<reference key="1">
    <citation type="journal article" date="2001" name="Proc. Natl. Acad. Sci. U.S.A.">
        <title>Genome sequence of an industrial microorganism Streptomyces avermitilis: deducing the ability of producing secondary metabolites.</title>
        <authorList>
            <person name="Omura S."/>
            <person name="Ikeda H."/>
            <person name="Ishikawa J."/>
            <person name="Hanamoto A."/>
            <person name="Takahashi C."/>
            <person name="Shinose M."/>
            <person name="Takahashi Y."/>
            <person name="Horikawa H."/>
            <person name="Nakazawa H."/>
            <person name="Osonoe T."/>
            <person name="Kikuchi H."/>
            <person name="Shiba T."/>
            <person name="Sakaki Y."/>
            <person name="Hattori M."/>
        </authorList>
    </citation>
    <scope>NUCLEOTIDE SEQUENCE [LARGE SCALE GENOMIC DNA]</scope>
    <source>
        <strain>ATCC 31267 / DSM 46492 / JCM 5070 / NBRC 14893 / NCIMB 12804 / NRRL 8165 / MA-4680</strain>
    </source>
</reference>
<reference key="2">
    <citation type="journal article" date="2003" name="Nat. Biotechnol.">
        <title>Complete genome sequence and comparative analysis of the industrial microorganism Streptomyces avermitilis.</title>
        <authorList>
            <person name="Ikeda H."/>
            <person name="Ishikawa J."/>
            <person name="Hanamoto A."/>
            <person name="Shinose M."/>
            <person name="Kikuchi H."/>
            <person name="Shiba T."/>
            <person name="Sakaki Y."/>
            <person name="Hattori M."/>
            <person name="Omura S."/>
        </authorList>
    </citation>
    <scope>NUCLEOTIDE SEQUENCE [LARGE SCALE GENOMIC DNA]</scope>
    <source>
        <strain>ATCC 31267 / DSM 46492 / JCM 5070 / NBRC 14893 / NCIMB 12804 / NRRL 8165 / MA-4680</strain>
    </source>
</reference>
<comment type="function">
    <text evidence="1">Together with its co-chaperonin GroES, plays an essential role in assisting protein folding. The GroEL-GroES system forms a nano-cage that allows encapsulation of the non-native substrate proteins and provides a physical environment optimized to promote and accelerate protein folding.</text>
</comment>
<comment type="catalytic activity">
    <reaction evidence="1">
        <text>ATP + H2O + a folded polypeptide = ADP + phosphate + an unfolded polypeptide.</text>
        <dbReference type="EC" id="5.6.1.7"/>
    </reaction>
</comment>
<comment type="subunit">
    <text evidence="1">Forms a cylinder of 14 subunits composed of two heptameric rings stacked back-to-back. Interacts with the co-chaperonin GroES.</text>
</comment>
<comment type="subcellular location">
    <subcellularLocation>
        <location evidence="1">Cytoplasm</location>
    </subcellularLocation>
</comment>
<comment type="similarity">
    <text evidence="1">Belongs to the chaperonin (HSP60) family.</text>
</comment>
<organism>
    <name type="scientific">Streptomyces avermitilis (strain ATCC 31267 / DSM 46492 / JCM 5070 / NBRC 14893 / NCIMB 12804 / NRRL 8165 / MA-4680)</name>
    <dbReference type="NCBI Taxonomy" id="227882"/>
    <lineage>
        <taxon>Bacteria</taxon>
        <taxon>Bacillati</taxon>
        <taxon>Actinomycetota</taxon>
        <taxon>Actinomycetes</taxon>
        <taxon>Kitasatosporales</taxon>
        <taxon>Streptomycetaceae</taxon>
        <taxon>Streptomyces</taxon>
    </lineage>
</organism>
<gene>
    <name evidence="1" type="primary">groEL2</name>
    <name evidence="1" type="synonym">groL2</name>
    <name type="ordered locus">SAV_3931</name>
</gene>
<sequence length="541" mass="56802">MAKIIAFDEEARRGLERGMNQLADAVKVTLGPKGRNVVLEKKWGAPTITNDGVSIAKEIELEDPYEKIGAELVKEVAKKTDDVAGDGTTTATVLAQALVREGLRNVAAGANPMALKRGIEKAVEAVSGALLEQAKDVETKEQIASTASISAADTQIGELIAEAMDKVGKEGVITVEESQTFGLELELTEGMRFDKGYISAYFATDMERMEASLDDPYILIANSKISSVKDLLPLLEKVMQSGKPLLIIAEDVEGEALSTLVVNKIRGTFKSVAVKAPGFGDRRKAMLGDIAILTGGEVISEEVGLKLENASIDLLGRARKVVITKDETTIVDGAGSADQVAGRVNQIRAEIENSDSDYDREKLQERLAKLAGGVAVIKAGAATEVELKERKHRIEDAVRNAKAAVEEGIVAGGGVALIQASSVFEKLELTGDEATGANAVRLALEAPLKQIAVNGGLEGGVIVEKVRNLPVGHGLNAATGEYVDMIAEGIIDPAKVTRSALQNAASIAALFLTTEAVIADKPEKAAAGGAPGGMPGGDMDF</sequence>
<accession>Q82GG6</accession>
<evidence type="ECO:0000255" key="1">
    <source>
        <dbReference type="HAMAP-Rule" id="MF_00600"/>
    </source>
</evidence>
<proteinExistence type="inferred from homology"/>
<keyword id="KW-0067">ATP-binding</keyword>
<keyword id="KW-0143">Chaperone</keyword>
<keyword id="KW-0963">Cytoplasm</keyword>
<keyword id="KW-0413">Isomerase</keyword>
<keyword id="KW-0547">Nucleotide-binding</keyword>
<keyword id="KW-1185">Reference proteome</keyword>
<feature type="chain" id="PRO_0000063548" description="Chaperonin GroEL 2">
    <location>
        <begin position="1"/>
        <end position="541"/>
    </location>
</feature>
<feature type="binding site" evidence="1">
    <location>
        <begin position="29"/>
        <end position="32"/>
    </location>
    <ligand>
        <name>ATP</name>
        <dbReference type="ChEBI" id="CHEBI:30616"/>
    </ligand>
</feature>
<feature type="binding site" evidence="1">
    <location>
        <begin position="86"/>
        <end position="90"/>
    </location>
    <ligand>
        <name>ATP</name>
        <dbReference type="ChEBI" id="CHEBI:30616"/>
    </ligand>
</feature>
<feature type="binding site" evidence="1">
    <location>
        <position position="413"/>
    </location>
    <ligand>
        <name>ATP</name>
        <dbReference type="ChEBI" id="CHEBI:30616"/>
    </ligand>
</feature>
<feature type="binding site" evidence="1">
    <location>
        <begin position="476"/>
        <end position="478"/>
    </location>
    <ligand>
        <name>ATP</name>
        <dbReference type="ChEBI" id="CHEBI:30616"/>
    </ligand>
</feature>
<feature type="binding site" evidence="1">
    <location>
        <position position="492"/>
    </location>
    <ligand>
        <name>ATP</name>
        <dbReference type="ChEBI" id="CHEBI:30616"/>
    </ligand>
</feature>
<dbReference type="EC" id="5.6.1.7" evidence="1"/>
<dbReference type="EMBL" id="BA000030">
    <property type="protein sequence ID" value="BAC71643.1"/>
    <property type="molecule type" value="Genomic_DNA"/>
</dbReference>
<dbReference type="SMR" id="Q82GG6"/>
<dbReference type="GeneID" id="41540998"/>
<dbReference type="KEGG" id="sma:SAVERM_3931"/>
<dbReference type="eggNOG" id="COG0459">
    <property type="taxonomic scope" value="Bacteria"/>
</dbReference>
<dbReference type="HOGENOM" id="CLU_016503_3_0_11"/>
<dbReference type="OrthoDB" id="9766614at2"/>
<dbReference type="Proteomes" id="UP000000428">
    <property type="component" value="Chromosome"/>
</dbReference>
<dbReference type="GO" id="GO:0005737">
    <property type="term" value="C:cytoplasm"/>
    <property type="evidence" value="ECO:0007669"/>
    <property type="project" value="UniProtKB-SubCell"/>
</dbReference>
<dbReference type="GO" id="GO:0005524">
    <property type="term" value="F:ATP binding"/>
    <property type="evidence" value="ECO:0007669"/>
    <property type="project" value="UniProtKB-UniRule"/>
</dbReference>
<dbReference type="GO" id="GO:0140662">
    <property type="term" value="F:ATP-dependent protein folding chaperone"/>
    <property type="evidence" value="ECO:0007669"/>
    <property type="project" value="InterPro"/>
</dbReference>
<dbReference type="GO" id="GO:0016853">
    <property type="term" value="F:isomerase activity"/>
    <property type="evidence" value="ECO:0007669"/>
    <property type="project" value="UniProtKB-KW"/>
</dbReference>
<dbReference type="GO" id="GO:0051082">
    <property type="term" value="F:unfolded protein binding"/>
    <property type="evidence" value="ECO:0007669"/>
    <property type="project" value="UniProtKB-UniRule"/>
</dbReference>
<dbReference type="GO" id="GO:0042026">
    <property type="term" value="P:protein refolding"/>
    <property type="evidence" value="ECO:0007669"/>
    <property type="project" value="UniProtKB-UniRule"/>
</dbReference>
<dbReference type="CDD" id="cd03344">
    <property type="entry name" value="GroEL"/>
    <property type="match status" value="1"/>
</dbReference>
<dbReference type="FunFam" id="3.50.7.10:FF:000001">
    <property type="entry name" value="60 kDa chaperonin"/>
    <property type="match status" value="1"/>
</dbReference>
<dbReference type="Gene3D" id="3.50.7.10">
    <property type="entry name" value="GroEL"/>
    <property type="match status" value="1"/>
</dbReference>
<dbReference type="Gene3D" id="1.10.560.10">
    <property type="entry name" value="GroEL-like equatorial domain"/>
    <property type="match status" value="1"/>
</dbReference>
<dbReference type="Gene3D" id="3.30.260.10">
    <property type="entry name" value="TCP-1-like chaperonin intermediate domain"/>
    <property type="match status" value="1"/>
</dbReference>
<dbReference type="HAMAP" id="MF_00600">
    <property type="entry name" value="CH60"/>
    <property type="match status" value="1"/>
</dbReference>
<dbReference type="InterPro" id="IPR018370">
    <property type="entry name" value="Chaperonin_Cpn60_CS"/>
</dbReference>
<dbReference type="InterPro" id="IPR001844">
    <property type="entry name" value="Cpn60/GroEL"/>
</dbReference>
<dbReference type="InterPro" id="IPR002423">
    <property type="entry name" value="Cpn60/GroEL/TCP-1"/>
</dbReference>
<dbReference type="InterPro" id="IPR027409">
    <property type="entry name" value="GroEL-like_apical_dom_sf"/>
</dbReference>
<dbReference type="InterPro" id="IPR027413">
    <property type="entry name" value="GROEL-like_equatorial_sf"/>
</dbReference>
<dbReference type="InterPro" id="IPR027410">
    <property type="entry name" value="TCP-1-like_intermed_sf"/>
</dbReference>
<dbReference type="NCBIfam" id="TIGR02348">
    <property type="entry name" value="GroEL"/>
    <property type="match status" value="1"/>
</dbReference>
<dbReference type="NCBIfam" id="NF000592">
    <property type="entry name" value="PRK00013.1"/>
    <property type="match status" value="1"/>
</dbReference>
<dbReference type="NCBIfam" id="NF009487">
    <property type="entry name" value="PRK12849.1"/>
    <property type="match status" value="1"/>
</dbReference>
<dbReference type="NCBIfam" id="NF009488">
    <property type="entry name" value="PRK12850.1"/>
    <property type="match status" value="1"/>
</dbReference>
<dbReference type="NCBIfam" id="NF009489">
    <property type="entry name" value="PRK12851.1"/>
    <property type="match status" value="1"/>
</dbReference>
<dbReference type="PANTHER" id="PTHR45633">
    <property type="entry name" value="60 KDA HEAT SHOCK PROTEIN, MITOCHONDRIAL"/>
    <property type="match status" value="1"/>
</dbReference>
<dbReference type="Pfam" id="PF00118">
    <property type="entry name" value="Cpn60_TCP1"/>
    <property type="match status" value="1"/>
</dbReference>
<dbReference type="PRINTS" id="PR00298">
    <property type="entry name" value="CHAPERONIN60"/>
</dbReference>
<dbReference type="SUPFAM" id="SSF52029">
    <property type="entry name" value="GroEL apical domain-like"/>
    <property type="match status" value="1"/>
</dbReference>
<dbReference type="SUPFAM" id="SSF48592">
    <property type="entry name" value="GroEL equatorial domain-like"/>
    <property type="match status" value="2"/>
</dbReference>
<dbReference type="PROSITE" id="PS00296">
    <property type="entry name" value="CHAPERONINS_CPN60"/>
    <property type="match status" value="1"/>
</dbReference>
<name>CH602_STRAW</name>
<protein>
    <recommendedName>
        <fullName evidence="1">Chaperonin GroEL 2</fullName>
        <ecNumber evidence="1">5.6.1.7</ecNumber>
    </recommendedName>
    <alternativeName>
        <fullName evidence="1">60 kDa chaperonin 2</fullName>
    </alternativeName>
    <alternativeName>
        <fullName evidence="1">Chaperonin-60 2</fullName>
        <shortName evidence="1">Cpn60 2</shortName>
    </alternativeName>
</protein>